<reference key="1">
    <citation type="journal article" date="2004" name="Nature">
        <title>Genome evolution in yeasts.</title>
        <authorList>
            <person name="Dujon B."/>
            <person name="Sherman D."/>
            <person name="Fischer G."/>
            <person name="Durrens P."/>
            <person name="Casaregola S."/>
            <person name="Lafontaine I."/>
            <person name="de Montigny J."/>
            <person name="Marck C."/>
            <person name="Neuveglise C."/>
            <person name="Talla E."/>
            <person name="Goffard N."/>
            <person name="Frangeul L."/>
            <person name="Aigle M."/>
            <person name="Anthouard V."/>
            <person name="Babour A."/>
            <person name="Barbe V."/>
            <person name="Barnay S."/>
            <person name="Blanchin S."/>
            <person name="Beckerich J.-M."/>
            <person name="Beyne E."/>
            <person name="Bleykasten C."/>
            <person name="Boisrame A."/>
            <person name="Boyer J."/>
            <person name="Cattolico L."/>
            <person name="Confanioleri F."/>
            <person name="de Daruvar A."/>
            <person name="Despons L."/>
            <person name="Fabre E."/>
            <person name="Fairhead C."/>
            <person name="Ferry-Dumazet H."/>
            <person name="Groppi A."/>
            <person name="Hantraye F."/>
            <person name="Hennequin C."/>
            <person name="Jauniaux N."/>
            <person name="Joyet P."/>
            <person name="Kachouri R."/>
            <person name="Kerrest A."/>
            <person name="Koszul R."/>
            <person name="Lemaire M."/>
            <person name="Lesur I."/>
            <person name="Ma L."/>
            <person name="Muller H."/>
            <person name="Nicaud J.-M."/>
            <person name="Nikolski M."/>
            <person name="Oztas S."/>
            <person name="Ozier-Kalogeropoulos O."/>
            <person name="Pellenz S."/>
            <person name="Potier S."/>
            <person name="Richard G.-F."/>
            <person name="Straub M.-L."/>
            <person name="Suleau A."/>
            <person name="Swennen D."/>
            <person name="Tekaia F."/>
            <person name="Wesolowski-Louvel M."/>
            <person name="Westhof E."/>
            <person name="Wirth B."/>
            <person name="Zeniou-Meyer M."/>
            <person name="Zivanovic Y."/>
            <person name="Bolotin-Fukuhara M."/>
            <person name="Thierry A."/>
            <person name="Bouchier C."/>
            <person name="Caudron B."/>
            <person name="Scarpelli C."/>
            <person name="Gaillardin C."/>
            <person name="Weissenbach J."/>
            <person name="Wincker P."/>
            <person name="Souciet J.-L."/>
        </authorList>
    </citation>
    <scope>NUCLEOTIDE SEQUENCE [LARGE SCALE GENOMIC DNA]</scope>
    <source>
        <strain>ATCC 2001 / BCRC 20586 / JCM 3761 / NBRC 0622 / NRRL Y-65 / CBS 138</strain>
    </source>
</reference>
<protein>
    <recommendedName>
        <fullName>Pre-mRNA-splicing factor SYF2</fullName>
    </recommendedName>
</protein>
<feature type="chain" id="PRO_0000072373" description="Pre-mRNA-splicing factor SYF2">
    <location>
        <begin position="1"/>
        <end position="200"/>
    </location>
</feature>
<feature type="region of interest" description="Disordered" evidence="3">
    <location>
        <begin position="25"/>
        <end position="67"/>
    </location>
</feature>
<feature type="region of interest" description="Disordered" evidence="3">
    <location>
        <begin position="85"/>
        <end position="117"/>
    </location>
</feature>
<feature type="region of interest" description="Disordered" evidence="3">
    <location>
        <begin position="157"/>
        <end position="200"/>
    </location>
</feature>
<feature type="coiled-coil region" evidence="2">
    <location>
        <begin position="1"/>
        <end position="37"/>
    </location>
</feature>
<feature type="compositionally biased region" description="Basic and acidic residues" evidence="3">
    <location>
        <begin position="25"/>
        <end position="39"/>
    </location>
</feature>
<feature type="compositionally biased region" description="Basic and acidic residues" evidence="3">
    <location>
        <begin position="54"/>
        <end position="64"/>
    </location>
</feature>
<feature type="compositionally biased region" description="Basic and acidic residues" evidence="3">
    <location>
        <begin position="107"/>
        <end position="117"/>
    </location>
</feature>
<feature type="compositionally biased region" description="Basic and acidic residues" evidence="3">
    <location>
        <begin position="157"/>
        <end position="175"/>
    </location>
</feature>
<feature type="compositionally biased region" description="Polar residues" evidence="3">
    <location>
        <begin position="176"/>
        <end position="190"/>
    </location>
</feature>
<feature type="compositionally biased region" description="Basic and acidic residues" evidence="3">
    <location>
        <begin position="191"/>
        <end position="200"/>
    </location>
</feature>
<evidence type="ECO:0000250" key="1"/>
<evidence type="ECO:0000255" key="2"/>
<evidence type="ECO:0000256" key="3">
    <source>
        <dbReference type="SAM" id="MobiDB-lite"/>
    </source>
</evidence>
<evidence type="ECO:0000305" key="4"/>
<proteinExistence type="inferred from homology"/>
<keyword id="KW-0175">Coiled coil</keyword>
<keyword id="KW-0507">mRNA processing</keyword>
<keyword id="KW-0508">mRNA splicing</keyword>
<keyword id="KW-0539">Nucleus</keyword>
<keyword id="KW-1185">Reference proteome</keyword>
<keyword id="KW-0747">Spliceosome</keyword>
<dbReference type="EMBL" id="CR380955">
    <property type="protein sequence ID" value="CAG60643.1"/>
    <property type="molecule type" value="Genomic_DNA"/>
</dbReference>
<dbReference type="RefSeq" id="XP_447698.1">
    <property type="nucleotide sequence ID" value="XM_447698.1"/>
</dbReference>
<dbReference type="SMR" id="Q6FPZ6"/>
<dbReference type="FunCoup" id="Q6FPZ6">
    <property type="interactions" value="177"/>
</dbReference>
<dbReference type="STRING" id="284593.Q6FPZ6"/>
<dbReference type="EnsemblFungi" id="CAGL0I10538g-T">
    <property type="protein sequence ID" value="CAGL0I10538g-T-p1"/>
    <property type="gene ID" value="CAGL0I10538g"/>
</dbReference>
<dbReference type="KEGG" id="cgr:2889247"/>
<dbReference type="CGD" id="CAL0132514">
    <property type="gene designation" value="CAGL0I10538g"/>
</dbReference>
<dbReference type="VEuPathDB" id="FungiDB:CAGL0I10538g"/>
<dbReference type="eggNOG" id="KOG2609">
    <property type="taxonomic scope" value="Eukaryota"/>
</dbReference>
<dbReference type="HOGENOM" id="CLU_114239_0_0_1"/>
<dbReference type="InParanoid" id="Q6FPZ6"/>
<dbReference type="OMA" id="KLMNYTL"/>
<dbReference type="Proteomes" id="UP000002428">
    <property type="component" value="Chromosome I"/>
</dbReference>
<dbReference type="GO" id="GO:0005829">
    <property type="term" value="C:cytosol"/>
    <property type="evidence" value="ECO:0007669"/>
    <property type="project" value="EnsemblFungi"/>
</dbReference>
<dbReference type="GO" id="GO:0000974">
    <property type="term" value="C:Prp19 complex"/>
    <property type="evidence" value="ECO:0007669"/>
    <property type="project" value="EnsemblFungi"/>
</dbReference>
<dbReference type="GO" id="GO:0071006">
    <property type="term" value="C:U2-type catalytic step 1 spliceosome"/>
    <property type="evidence" value="ECO:0007669"/>
    <property type="project" value="EnsemblFungi"/>
</dbReference>
<dbReference type="GO" id="GO:0071007">
    <property type="term" value="C:U2-type catalytic step 2 spliceosome"/>
    <property type="evidence" value="ECO:0007669"/>
    <property type="project" value="EnsemblFungi"/>
</dbReference>
<dbReference type="GO" id="GO:0071008">
    <property type="term" value="C:U2-type post-mRNA release spliceosomal complex"/>
    <property type="evidence" value="ECO:0007669"/>
    <property type="project" value="EnsemblFungi"/>
</dbReference>
<dbReference type="GO" id="GO:0071004">
    <property type="term" value="C:U2-type prespliceosome"/>
    <property type="evidence" value="ECO:0007669"/>
    <property type="project" value="EnsemblFungi"/>
</dbReference>
<dbReference type="GO" id="GO:0000398">
    <property type="term" value="P:mRNA splicing, via spliceosome"/>
    <property type="evidence" value="ECO:0007669"/>
    <property type="project" value="EnsemblFungi"/>
</dbReference>
<gene>
    <name type="primary">SYF2</name>
    <name type="ordered locus">CAGL0I10538g</name>
</gene>
<accession>Q6FPZ6</accession>
<name>SYF2_CANGA</name>
<sequence>MNLEDYNEKLKLLKKSVQDIKIRNRNLLKQEAEEKEKGLKPRVYSMHDDEDDSDEKRSSDEQSDMRTNLFQYTVQDFIDWEKRQQRKKKSKLESKSGMRLQHLAKNTYDKELQNLPRPEFKMKAKETQFRINKDSGKVNIKDNKELVQRLSQNLKETAKQRYDSNRKIANDKEHTSLSGSINAKNLQFNKSLDDDHEAEK</sequence>
<comment type="function">
    <text evidence="1">Involved in pre-mRNA splicing.</text>
</comment>
<comment type="subunit">
    <text evidence="1">Associated with the spliceosome.</text>
</comment>
<comment type="subcellular location">
    <subcellularLocation>
        <location evidence="1">Nucleus</location>
    </subcellularLocation>
</comment>
<comment type="similarity">
    <text evidence="4">Belongs to the SYF2 family.</text>
</comment>
<organism>
    <name type="scientific">Candida glabrata (strain ATCC 2001 / BCRC 20586 / JCM 3761 / NBRC 0622 / NRRL Y-65 / CBS 138)</name>
    <name type="common">Yeast</name>
    <name type="synonym">Nakaseomyces glabratus</name>
    <dbReference type="NCBI Taxonomy" id="284593"/>
    <lineage>
        <taxon>Eukaryota</taxon>
        <taxon>Fungi</taxon>
        <taxon>Dikarya</taxon>
        <taxon>Ascomycota</taxon>
        <taxon>Saccharomycotina</taxon>
        <taxon>Saccharomycetes</taxon>
        <taxon>Saccharomycetales</taxon>
        <taxon>Saccharomycetaceae</taxon>
        <taxon>Nakaseomyces</taxon>
    </lineage>
</organism>